<proteinExistence type="inferred from homology"/>
<organism>
    <name type="scientific">Saccharopolyspora erythraea (strain ATCC 11635 / DSM 40517 / JCM 4748 / NBRC 13426 / NCIMB 8594 / NRRL 2338)</name>
    <dbReference type="NCBI Taxonomy" id="405948"/>
    <lineage>
        <taxon>Bacteria</taxon>
        <taxon>Bacillati</taxon>
        <taxon>Actinomycetota</taxon>
        <taxon>Actinomycetes</taxon>
        <taxon>Pseudonocardiales</taxon>
        <taxon>Pseudonocardiaceae</taxon>
        <taxon>Saccharopolyspora</taxon>
    </lineage>
</organism>
<feature type="chain" id="PRO_1000063601" description="3-isopropylmalate dehydratase large subunit">
    <location>
        <begin position="1"/>
        <end position="467"/>
    </location>
</feature>
<feature type="region of interest" description="Disordered" evidence="2">
    <location>
        <begin position="417"/>
        <end position="445"/>
    </location>
</feature>
<feature type="binding site" evidence="1">
    <location>
        <position position="348"/>
    </location>
    <ligand>
        <name>[4Fe-4S] cluster</name>
        <dbReference type="ChEBI" id="CHEBI:49883"/>
    </ligand>
</feature>
<feature type="binding site" evidence="1">
    <location>
        <position position="408"/>
    </location>
    <ligand>
        <name>[4Fe-4S] cluster</name>
        <dbReference type="ChEBI" id="CHEBI:49883"/>
    </ligand>
</feature>
<feature type="binding site" evidence="1">
    <location>
        <position position="411"/>
    </location>
    <ligand>
        <name>[4Fe-4S] cluster</name>
        <dbReference type="ChEBI" id="CHEBI:49883"/>
    </ligand>
</feature>
<accession>A4FMP2</accession>
<evidence type="ECO:0000255" key="1">
    <source>
        <dbReference type="HAMAP-Rule" id="MF_01026"/>
    </source>
</evidence>
<evidence type="ECO:0000256" key="2">
    <source>
        <dbReference type="SAM" id="MobiDB-lite"/>
    </source>
</evidence>
<sequence>MGKTLAEKVWEAHIVRRGEGYEPDLLYIDLHLVHEVTSPQAFEGLRLAGRQVRRPDLTLATEDHNVPTTGIDLPIADPVSRTQVDTLRRNCEEFGIRLHPMGDAEQGIVHVVGPQLGLTQPGTTVVCGDSHTSTHGAFGALAFGIGTSEVEHVLATQTLPLRPFKTMAINIEGTLRPGVTSKDVILAVIAKIGTGGGQGYVLEYRGSAVEKMSMEARMTMCNMSIEAGARAGMIAPDETTFAYLQGRPHAPEGTEWDAAVEYWKTLRTDEDAEFDAEVTLDADELTPFVTWGTNPGQGLPLGARIPDPAAIADESERFATEKALDYMGLEAGTPLREVAVDTVFLGSCTNGRIEDLRAAADVLKGRKVASEVRMLVVPGSMRVRKQAEAEGLNEVFTAAGAEWRSAGCSMCLGMNPDQLTPGERSASTSNRNFEGRQGKGGRTHLVSPLVAAATAVRGTLSSPEDLD</sequence>
<protein>
    <recommendedName>
        <fullName evidence="1">3-isopropylmalate dehydratase large subunit</fullName>
        <ecNumber evidence="1">4.2.1.33</ecNumber>
    </recommendedName>
    <alternativeName>
        <fullName evidence="1">Alpha-IPM isomerase</fullName>
        <shortName evidence="1">IPMI</shortName>
    </alternativeName>
    <alternativeName>
        <fullName evidence="1">Isopropylmalate isomerase</fullName>
    </alternativeName>
</protein>
<reference key="1">
    <citation type="journal article" date="2007" name="Nat. Biotechnol.">
        <title>Complete genome sequence of the erythromycin-producing bacterium Saccharopolyspora erythraea NRRL23338.</title>
        <authorList>
            <person name="Oliynyk M."/>
            <person name="Samborskyy M."/>
            <person name="Lester J.B."/>
            <person name="Mironenko T."/>
            <person name="Scott N."/>
            <person name="Dickens S."/>
            <person name="Haydock S.F."/>
            <person name="Leadlay P.F."/>
        </authorList>
    </citation>
    <scope>NUCLEOTIDE SEQUENCE [LARGE SCALE GENOMIC DNA]</scope>
    <source>
        <strain>ATCC 11635 / DSM 40517 / JCM 4748 / NBRC 13426 / NCIMB 8594 / NRRL 2338</strain>
    </source>
</reference>
<keyword id="KW-0004">4Fe-4S</keyword>
<keyword id="KW-0028">Amino-acid biosynthesis</keyword>
<keyword id="KW-0100">Branched-chain amino acid biosynthesis</keyword>
<keyword id="KW-0408">Iron</keyword>
<keyword id="KW-0411">Iron-sulfur</keyword>
<keyword id="KW-0432">Leucine biosynthesis</keyword>
<keyword id="KW-0456">Lyase</keyword>
<keyword id="KW-0479">Metal-binding</keyword>
<keyword id="KW-1185">Reference proteome</keyword>
<comment type="function">
    <text evidence="1">Catalyzes the isomerization between 2-isopropylmalate and 3-isopropylmalate, via the formation of 2-isopropylmaleate.</text>
</comment>
<comment type="catalytic activity">
    <reaction evidence="1">
        <text>(2R,3S)-3-isopropylmalate = (2S)-2-isopropylmalate</text>
        <dbReference type="Rhea" id="RHEA:32287"/>
        <dbReference type="ChEBI" id="CHEBI:1178"/>
        <dbReference type="ChEBI" id="CHEBI:35121"/>
        <dbReference type="EC" id="4.2.1.33"/>
    </reaction>
</comment>
<comment type="cofactor">
    <cofactor evidence="1">
        <name>[4Fe-4S] cluster</name>
        <dbReference type="ChEBI" id="CHEBI:49883"/>
    </cofactor>
    <text evidence="1">Binds 1 [4Fe-4S] cluster per subunit.</text>
</comment>
<comment type="pathway">
    <text evidence="1">Amino-acid biosynthesis; L-leucine biosynthesis; L-leucine from 3-methyl-2-oxobutanoate: step 2/4.</text>
</comment>
<comment type="subunit">
    <text evidence="1">Heterodimer of LeuC and LeuD.</text>
</comment>
<comment type="similarity">
    <text evidence="1">Belongs to the aconitase/IPM isomerase family. LeuC type 1 subfamily.</text>
</comment>
<name>LEUC_SACEN</name>
<dbReference type="EC" id="4.2.1.33" evidence="1"/>
<dbReference type="EMBL" id="AM420293">
    <property type="protein sequence ID" value="CAM05317.1"/>
    <property type="molecule type" value="Genomic_DNA"/>
</dbReference>
<dbReference type="RefSeq" id="WP_009944410.1">
    <property type="nucleotide sequence ID" value="NC_009142.1"/>
</dbReference>
<dbReference type="SMR" id="A4FMP2"/>
<dbReference type="STRING" id="405948.SACE_6144"/>
<dbReference type="KEGG" id="sen:SACE_6144"/>
<dbReference type="eggNOG" id="COG0065">
    <property type="taxonomic scope" value="Bacteria"/>
</dbReference>
<dbReference type="HOGENOM" id="CLU_006714_3_4_11"/>
<dbReference type="OrthoDB" id="9802769at2"/>
<dbReference type="UniPathway" id="UPA00048">
    <property type="reaction ID" value="UER00071"/>
</dbReference>
<dbReference type="Proteomes" id="UP000006728">
    <property type="component" value="Chromosome"/>
</dbReference>
<dbReference type="GO" id="GO:0003861">
    <property type="term" value="F:3-isopropylmalate dehydratase activity"/>
    <property type="evidence" value="ECO:0007669"/>
    <property type="project" value="UniProtKB-UniRule"/>
</dbReference>
<dbReference type="GO" id="GO:0051539">
    <property type="term" value="F:4 iron, 4 sulfur cluster binding"/>
    <property type="evidence" value="ECO:0007669"/>
    <property type="project" value="UniProtKB-KW"/>
</dbReference>
<dbReference type="GO" id="GO:0046872">
    <property type="term" value="F:metal ion binding"/>
    <property type="evidence" value="ECO:0007669"/>
    <property type="project" value="UniProtKB-KW"/>
</dbReference>
<dbReference type="GO" id="GO:0009098">
    <property type="term" value="P:L-leucine biosynthetic process"/>
    <property type="evidence" value="ECO:0007669"/>
    <property type="project" value="UniProtKB-UniRule"/>
</dbReference>
<dbReference type="CDD" id="cd01583">
    <property type="entry name" value="IPMI"/>
    <property type="match status" value="1"/>
</dbReference>
<dbReference type="FunFam" id="3.30.499.10:FF:000007">
    <property type="entry name" value="3-isopropylmalate dehydratase large subunit"/>
    <property type="match status" value="1"/>
</dbReference>
<dbReference type="Gene3D" id="3.30.499.10">
    <property type="entry name" value="Aconitase, domain 3"/>
    <property type="match status" value="2"/>
</dbReference>
<dbReference type="HAMAP" id="MF_01026">
    <property type="entry name" value="LeuC_type1"/>
    <property type="match status" value="1"/>
</dbReference>
<dbReference type="InterPro" id="IPR004430">
    <property type="entry name" value="3-IsopropMal_deHydase_lsu"/>
</dbReference>
<dbReference type="InterPro" id="IPR015931">
    <property type="entry name" value="Acnase/IPM_dHydase_lsu_aba_1/3"/>
</dbReference>
<dbReference type="InterPro" id="IPR001030">
    <property type="entry name" value="Acoase/IPM_deHydtase_lsu_aba"/>
</dbReference>
<dbReference type="InterPro" id="IPR018136">
    <property type="entry name" value="Aconitase_4Fe-4S_BS"/>
</dbReference>
<dbReference type="InterPro" id="IPR036008">
    <property type="entry name" value="Aconitase_4Fe-4S_dom"/>
</dbReference>
<dbReference type="InterPro" id="IPR050067">
    <property type="entry name" value="IPM_dehydratase_rel_enz"/>
</dbReference>
<dbReference type="InterPro" id="IPR033941">
    <property type="entry name" value="IPMI_cat"/>
</dbReference>
<dbReference type="NCBIfam" id="TIGR00170">
    <property type="entry name" value="leuC"/>
    <property type="match status" value="1"/>
</dbReference>
<dbReference type="NCBIfam" id="NF004016">
    <property type="entry name" value="PRK05478.1"/>
    <property type="match status" value="1"/>
</dbReference>
<dbReference type="NCBIfam" id="NF009116">
    <property type="entry name" value="PRK12466.1"/>
    <property type="match status" value="1"/>
</dbReference>
<dbReference type="PANTHER" id="PTHR43822:SF9">
    <property type="entry name" value="3-ISOPROPYLMALATE DEHYDRATASE"/>
    <property type="match status" value="1"/>
</dbReference>
<dbReference type="PANTHER" id="PTHR43822">
    <property type="entry name" value="HOMOACONITASE, MITOCHONDRIAL-RELATED"/>
    <property type="match status" value="1"/>
</dbReference>
<dbReference type="Pfam" id="PF00330">
    <property type="entry name" value="Aconitase"/>
    <property type="match status" value="1"/>
</dbReference>
<dbReference type="PRINTS" id="PR00415">
    <property type="entry name" value="ACONITASE"/>
</dbReference>
<dbReference type="SUPFAM" id="SSF53732">
    <property type="entry name" value="Aconitase iron-sulfur domain"/>
    <property type="match status" value="1"/>
</dbReference>
<dbReference type="PROSITE" id="PS00450">
    <property type="entry name" value="ACONITASE_1"/>
    <property type="match status" value="1"/>
</dbReference>
<dbReference type="PROSITE" id="PS01244">
    <property type="entry name" value="ACONITASE_2"/>
    <property type="match status" value="1"/>
</dbReference>
<gene>
    <name evidence="1" type="primary">leuC</name>
    <name type="ordered locus">SACE_6144</name>
</gene>